<proteinExistence type="inferred from homology"/>
<sequence length="223" mass="25088">SCMKAAPMKEVSIRGQGSLAYPGLRTQGNLETLSGPNDATRGLTSLADTFEHVIEELLDEQQVIQPSKENKDADLYSTRVMLSSQVPLEPPLLFLLEEYKNYLDAANMSMRVRRHSDPARRGELSVCDSTSEWVTAAEKKTAVDMSGATVTVLEKVPVPKGQLKQYFYETKCSSKGYAKEGCRGIDKRYWNSQCRTTQSFVRALTMDNKKRIGWRFIRIDTSC</sequence>
<reference key="1">
    <citation type="journal article" date="2006" name="Mol. Phylogenet. Evol.">
        <title>Dispersal and vicariance: the complex evolutionary history of boid snakes.</title>
        <authorList>
            <person name="Noonan B.P."/>
            <person name="Chippindale P.T."/>
        </authorList>
    </citation>
    <scope>NUCLEOTIDE SEQUENCE [GENOMIC DNA]</scope>
</reference>
<evidence type="ECO:0000250" key="1"/>
<evidence type="ECO:0000255" key="2"/>
<evidence type="ECO:0000305" key="3"/>
<keyword id="KW-0165">Cleavage on pair of basic residues</keyword>
<keyword id="KW-1015">Disulfide bond</keyword>
<keyword id="KW-0325">Glycoprotein</keyword>
<keyword id="KW-0339">Growth factor</keyword>
<keyword id="KW-0964">Secreted</keyword>
<keyword id="KW-0732">Signal</keyword>
<dbReference type="EMBL" id="DQ465555">
    <property type="protein sequence ID" value="ABF56543.1"/>
    <property type="molecule type" value="Genomic_DNA"/>
</dbReference>
<dbReference type="SMR" id="Q1HN42"/>
<dbReference type="GlyCosmos" id="Q1HN42">
    <property type="glycosylation" value="1 site, No reported glycans"/>
</dbReference>
<dbReference type="GO" id="GO:0030424">
    <property type="term" value="C:axon"/>
    <property type="evidence" value="ECO:0007669"/>
    <property type="project" value="TreeGrafter"/>
</dbReference>
<dbReference type="GO" id="GO:0030425">
    <property type="term" value="C:dendrite"/>
    <property type="evidence" value="ECO:0007669"/>
    <property type="project" value="TreeGrafter"/>
</dbReference>
<dbReference type="GO" id="GO:0005615">
    <property type="term" value="C:extracellular space"/>
    <property type="evidence" value="ECO:0007669"/>
    <property type="project" value="TreeGrafter"/>
</dbReference>
<dbReference type="GO" id="GO:0008021">
    <property type="term" value="C:synaptic vesicle"/>
    <property type="evidence" value="ECO:0007669"/>
    <property type="project" value="TreeGrafter"/>
</dbReference>
<dbReference type="GO" id="GO:0008083">
    <property type="term" value="F:growth factor activity"/>
    <property type="evidence" value="ECO:0007669"/>
    <property type="project" value="UniProtKB-KW"/>
</dbReference>
<dbReference type="GO" id="GO:0005163">
    <property type="term" value="F:nerve growth factor receptor binding"/>
    <property type="evidence" value="ECO:0007669"/>
    <property type="project" value="TreeGrafter"/>
</dbReference>
<dbReference type="GO" id="GO:0007169">
    <property type="term" value="P:cell surface receptor protein tyrosine kinase signaling pathway"/>
    <property type="evidence" value="ECO:0007669"/>
    <property type="project" value="TreeGrafter"/>
</dbReference>
<dbReference type="GO" id="GO:0050804">
    <property type="term" value="P:modulation of chemical synaptic transmission"/>
    <property type="evidence" value="ECO:0007669"/>
    <property type="project" value="TreeGrafter"/>
</dbReference>
<dbReference type="GO" id="GO:0043524">
    <property type="term" value="P:negative regulation of neuron apoptotic process"/>
    <property type="evidence" value="ECO:0007669"/>
    <property type="project" value="TreeGrafter"/>
</dbReference>
<dbReference type="GO" id="GO:0021675">
    <property type="term" value="P:nerve development"/>
    <property type="evidence" value="ECO:0007669"/>
    <property type="project" value="TreeGrafter"/>
</dbReference>
<dbReference type="GO" id="GO:0038180">
    <property type="term" value="P:nerve growth factor signaling pathway"/>
    <property type="evidence" value="ECO:0007669"/>
    <property type="project" value="TreeGrafter"/>
</dbReference>
<dbReference type="GO" id="GO:0048812">
    <property type="term" value="P:neuron projection morphogenesis"/>
    <property type="evidence" value="ECO:0007669"/>
    <property type="project" value="TreeGrafter"/>
</dbReference>
<dbReference type="FunFam" id="2.10.90.10:FF:000002">
    <property type="entry name" value="Brain-derived neurotrophic factor"/>
    <property type="match status" value="1"/>
</dbReference>
<dbReference type="Gene3D" id="2.10.90.10">
    <property type="entry name" value="Cystine-knot cytokines"/>
    <property type="match status" value="1"/>
</dbReference>
<dbReference type="InterPro" id="IPR020430">
    <property type="entry name" value="Brain-der_neurotrophic_factor"/>
</dbReference>
<dbReference type="InterPro" id="IPR029034">
    <property type="entry name" value="Cystine-knot_cytokine"/>
</dbReference>
<dbReference type="InterPro" id="IPR020408">
    <property type="entry name" value="Nerve_growth_factor-like"/>
</dbReference>
<dbReference type="InterPro" id="IPR002072">
    <property type="entry name" value="Nerve_growth_factor-rel"/>
</dbReference>
<dbReference type="InterPro" id="IPR019846">
    <property type="entry name" value="Nerve_growth_factor_CS"/>
</dbReference>
<dbReference type="PANTHER" id="PTHR11589:SF3">
    <property type="entry name" value="BRAIN-DERIVED NEUROTROPHIC FACTOR"/>
    <property type="match status" value="1"/>
</dbReference>
<dbReference type="PANTHER" id="PTHR11589">
    <property type="entry name" value="NERVE GROWTH FACTOR NGF -RELATED"/>
    <property type="match status" value="1"/>
</dbReference>
<dbReference type="Pfam" id="PF00243">
    <property type="entry name" value="NGF"/>
    <property type="match status" value="1"/>
</dbReference>
<dbReference type="PIRSF" id="PIRSF001789">
    <property type="entry name" value="NGF"/>
    <property type="match status" value="1"/>
</dbReference>
<dbReference type="PRINTS" id="PR01912">
    <property type="entry name" value="BDNFACTOR"/>
</dbReference>
<dbReference type="PRINTS" id="PR00268">
    <property type="entry name" value="NGF"/>
</dbReference>
<dbReference type="SMART" id="SM00140">
    <property type="entry name" value="NGF"/>
    <property type="match status" value="1"/>
</dbReference>
<dbReference type="SUPFAM" id="SSF57501">
    <property type="entry name" value="Cystine-knot cytokines"/>
    <property type="match status" value="1"/>
</dbReference>
<dbReference type="PROSITE" id="PS00248">
    <property type="entry name" value="NGF_1"/>
    <property type="match status" value="1"/>
</dbReference>
<dbReference type="PROSITE" id="PS50270">
    <property type="entry name" value="NGF_2"/>
    <property type="match status" value="1"/>
</dbReference>
<comment type="function">
    <text evidence="1">Promotes the survival of neuronal populations that are all located either in the central nervous system or directly connected to it.</text>
</comment>
<comment type="subcellular location">
    <subcellularLocation>
        <location evidence="1">Secreted</location>
    </subcellularLocation>
</comment>
<comment type="similarity">
    <text evidence="3">Belongs to the NGF-beta family.</text>
</comment>
<protein>
    <recommendedName>
        <fullName evidence="3">Neurotrophic factor BDNF precursor form</fullName>
        <shortName>proBDNF</shortName>
    </recommendedName>
    <alternativeName>
        <fullName>Brain-derived neurotrophic factor</fullName>
    </alternativeName>
    <component>
        <recommendedName>
            <fullName>Neurotrophic factor BDNF</fullName>
        </recommendedName>
    </component>
</protein>
<name>BDNF_CHISR</name>
<feature type="signal peptide" evidence="2">
    <location>
        <begin position="1" status="less than"/>
        <end position="5"/>
    </location>
</feature>
<feature type="propeptide" id="PRO_0000346677" evidence="1">
    <location>
        <begin position="6"/>
        <end position="114"/>
    </location>
</feature>
<feature type="chain" id="PRO_0000346678" description="Neurotrophic factor BDNF">
    <location>
        <begin position="115"/>
        <end position="223" status="greater than"/>
    </location>
</feature>
<feature type="glycosylation site" description="N-linked (GlcNAc...) asparagine" evidence="2">
    <location>
        <position position="107"/>
    </location>
</feature>
<feature type="disulfide bond" evidence="1">
    <location>
        <begin position="127"/>
        <end position="194"/>
    </location>
</feature>
<feature type="disulfide bond" evidence="1">
    <location>
        <begin position="172"/>
        <end position="223"/>
    </location>
</feature>
<feature type="non-terminal residue">
    <location>
        <position position="1"/>
    </location>
</feature>
<feature type="non-terminal residue">
    <location>
        <position position="223"/>
    </location>
</feature>
<organism>
    <name type="scientific">Chilabothrus striatus</name>
    <name type="common">Haitian boa constrictor</name>
    <name type="synonym">Homalochilus striatus</name>
    <dbReference type="NCBI Taxonomy" id="44152"/>
    <lineage>
        <taxon>Eukaryota</taxon>
        <taxon>Metazoa</taxon>
        <taxon>Chordata</taxon>
        <taxon>Craniata</taxon>
        <taxon>Vertebrata</taxon>
        <taxon>Euteleostomi</taxon>
        <taxon>Lepidosauria</taxon>
        <taxon>Squamata</taxon>
        <taxon>Bifurcata</taxon>
        <taxon>Unidentata</taxon>
        <taxon>Episquamata</taxon>
        <taxon>Toxicofera</taxon>
        <taxon>Serpentes</taxon>
        <taxon>Henophidia</taxon>
        <taxon>Boidae</taxon>
        <taxon>Boinae</taxon>
        <taxon>Chilabothrus</taxon>
    </lineage>
</organism>
<gene>
    <name type="primary">BDNF</name>
</gene>
<accession>Q1HN42</accession>